<organism>
    <name type="scientific">Kineococcus radiotolerans (strain ATCC BAA-149 / DSM 14245 / SRS30216)</name>
    <dbReference type="NCBI Taxonomy" id="266940"/>
    <lineage>
        <taxon>Bacteria</taxon>
        <taxon>Bacillati</taxon>
        <taxon>Actinomycetota</taxon>
        <taxon>Actinomycetes</taxon>
        <taxon>Kineosporiales</taxon>
        <taxon>Kineosporiaceae</taxon>
        <taxon>Kineococcus</taxon>
    </lineage>
</organism>
<sequence length="135" mass="14445">MPPKSRTATASRKPRRKEKKNVAHGHAHIKSTFNNTIVSITDPTGAVIAWASAGQVGFKGSRKSTPFAAQMAAEAAARRAQEHGMRKVDVFVKGPGSGRETAIRSLQATGLEVGAIQDVTPSPHNGCRPPKRRRV</sequence>
<comment type="function">
    <text evidence="1">Located on the platform of the 30S subunit, it bridges several disparate RNA helices of the 16S rRNA. Forms part of the Shine-Dalgarno cleft in the 70S ribosome.</text>
</comment>
<comment type="subunit">
    <text evidence="1">Part of the 30S ribosomal subunit. Interacts with proteins S7 and S18. Binds to IF-3.</text>
</comment>
<comment type="similarity">
    <text evidence="1">Belongs to the universal ribosomal protein uS11 family.</text>
</comment>
<gene>
    <name evidence="1" type="primary">rpsK</name>
    <name type="ordered locus">Krad_0714</name>
</gene>
<feature type="chain" id="PRO_1000086194" description="Small ribosomal subunit protein uS11">
    <location>
        <begin position="1"/>
        <end position="135"/>
    </location>
</feature>
<feature type="region of interest" description="Disordered" evidence="2">
    <location>
        <begin position="1"/>
        <end position="27"/>
    </location>
</feature>
<feature type="region of interest" description="Disordered" evidence="2">
    <location>
        <begin position="114"/>
        <end position="135"/>
    </location>
</feature>
<feature type="compositionally biased region" description="Polar residues" evidence="2">
    <location>
        <begin position="1"/>
        <end position="10"/>
    </location>
</feature>
<feature type="compositionally biased region" description="Basic residues" evidence="2">
    <location>
        <begin position="12"/>
        <end position="27"/>
    </location>
</feature>
<name>RS11_KINRD</name>
<dbReference type="EMBL" id="CP000750">
    <property type="protein sequence ID" value="ABS02203.1"/>
    <property type="molecule type" value="Genomic_DNA"/>
</dbReference>
<dbReference type="RefSeq" id="WP_012084952.1">
    <property type="nucleotide sequence ID" value="NC_009664.2"/>
</dbReference>
<dbReference type="SMR" id="A6W5W4"/>
<dbReference type="STRING" id="266940.Krad_0714"/>
<dbReference type="KEGG" id="kra:Krad_0714"/>
<dbReference type="eggNOG" id="COG0100">
    <property type="taxonomic scope" value="Bacteria"/>
</dbReference>
<dbReference type="HOGENOM" id="CLU_072439_5_0_11"/>
<dbReference type="OrthoDB" id="9806415at2"/>
<dbReference type="Proteomes" id="UP000001116">
    <property type="component" value="Chromosome"/>
</dbReference>
<dbReference type="GO" id="GO:1990904">
    <property type="term" value="C:ribonucleoprotein complex"/>
    <property type="evidence" value="ECO:0007669"/>
    <property type="project" value="UniProtKB-KW"/>
</dbReference>
<dbReference type="GO" id="GO:0005840">
    <property type="term" value="C:ribosome"/>
    <property type="evidence" value="ECO:0007669"/>
    <property type="project" value="UniProtKB-KW"/>
</dbReference>
<dbReference type="GO" id="GO:0019843">
    <property type="term" value="F:rRNA binding"/>
    <property type="evidence" value="ECO:0007669"/>
    <property type="project" value="UniProtKB-UniRule"/>
</dbReference>
<dbReference type="GO" id="GO:0003735">
    <property type="term" value="F:structural constituent of ribosome"/>
    <property type="evidence" value="ECO:0007669"/>
    <property type="project" value="InterPro"/>
</dbReference>
<dbReference type="GO" id="GO:0006412">
    <property type="term" value="P:translation"/>
    <property type="evidence" value="ECO:0007669"/>
    <property type="project" value="UniProtKB-UniRule"/>
</dbReference>
<dbReference type="FunFam" id="3.30.420.80:FF:000001">
    <property type="entry name" value="30S ribosomal protein S11"/>
    <property type="match status" value="1"/>
</dbReference>
<dbReference type="Gene3D" id="3.30.420.80">
    <property type="entry name" value="Ribosomal protein S11"/>
    <property type="match status" value="1"/>
</dbReference>
<dbReference type="HAMAP" id="MF_01310">
    <property type="entry name" value="Ribosomal_uS11"/>
    <property type="match status" value="1"/>
</dbReference>
<dbReference type="InterPro" id="IPR001971">
    <property type="entry name" value="Ribosomal_uS11"/>
</dbReference>
<dbReference type="InterPro" id="IPR019981">
    <property type="entry name" value="Ribosomal_uS11_bac-type"/>
</dbReference>
<dbReference type="InterPro" id="IPR018102">
    <property type="entry name" value="Ribosomal_uS11_CS"/>
</dbReference>
<dbReference type="InterPro" id="IPR036967">
    <property type="entry name" value="Ribosomal_uS11_sf"/>
</dbReference>
<dbReference type="NCBIfam" id="NF003698">
    <property type="entry name" value="PRK05309.1"/>
    <property type="match status" value="1"/>
</dbReference>
<dbReference type="NCBIfam" id="TIGR03632">
    <property type="entry name" value="uS11_bact"/>
    <property type="match status" value="1"/>
</dbReference>
<dbReference type="PANTHER" id="PTHR11759">
    <property type="entry name" value="40S RIBOSOMAL PROTEIN S14/30S RIBOSOMAL PROTEIN S11"/>
    <property type="match status" value="1"/>
</dbReference>
<dbReference type="Pfam" id="PF00411">
    <property type="entry name" value="Ribosomal_S11"/>
    <property type="match status" value="1"/>
</dbReference>
<dbReference type="PIRSF" id="PIRSF002131">
    <property type="entry name" value="Ribosomal_S11"/>
    <property type="match status" value="1"/>
</dbReference>
<dbReference type="SUPFAM" id="SSF53137">
    <property type="entry name" value="Translational machinery components"/>
    <property type="match status" value="1"/>
</dbReference>
<dbReference type="PROSITE" id="PS00054">
    <property type="entry name" value="RIBOSOMAL_S11"/>
    <property type="match status" value="1"/>
</dbReference>
<accession>A6W5W4</accession>
<keyword id="KW-1185">Reference proteome</keyword>
<keyword id="KW-0687">Ribonucleoprotein</keyword>
<keyword id="KW-0689">Ribosomal protein</keyword>
<keyword id="KW-0694">RNA-binding</keyword>
<keyword id="KW-0699">rRNA-binding</keyword>
<reference key="1">
    <citation type="journal article" date="2008" name="PLoS ONE">
        <title>Survival in nuclear waste, extreme resistance, and potential applications gleaned from the genome sequence of Kineococcus radiotolerans SRS30216.</title>
        <authorList>
            <person name="Bagwell C.E."/>
            <person name="Bhat S."/>
            <person name="Hawkins G.M."/>
            <person name="Smith B.W."/>
            <person name="Biswas T."/>
            <person name="Hoover T.R."/>
            <person name="Saunders E."/>
            <person name="Han C.S."/>
            <person name="Tsodikov O.V."/>
            <person name="Shimkets L.J."/>
        </authorList>
    </citation>
    <scope>NUCLEOTIDE SEQUENCE [LARGE SCALE GENOMIC DNA]</scope>
    <source>
        <strain>ATCC BAA-149 / DSM 14245 / SRS30216</strain>
    </source>
</reference>
<proteinExistence type="inferred from homology"/>
<evidence type="ECO:0000255" key="1">
    <source>
        <dbReference type="HAMAP-Rule" id="MF_01310"/>
    </source>
</evidence>
<evidence type="ECO:0000256" key="2">
    <source>
        <dbReference type="SAM" id="MobiDB-lite"/>
    </source>
</evidence>
<evidence type="ECO:0000305" key="3"/>
<protein>
    <recommendedName>
        <fullName evidence="1">Small ribosomal subunit protein uS11</fullName>
    </recommendedName>
    <alternativeName>
        <fullName evidence="3">30S ribosomal protein S11</fullName>
    </alternativeName>
</protein>